<keyword id="KW-0027">Amidation</keyword>
<keyword id="KW-1015">Disulfide bond</keyword>
<keyword id="KW-0872">Ion channel impairing toxin</keyword>
<keyword id="KW-0960">Knottin</keyword>
<keyword id="KW-0528">Neurotoxin</keyword>
<keyword id="KW-0638">Presynaptic neurotoxin</keyword>
<keyword id="KW-0964">Secreted</keyword>
<keyword id="KW-0732">Signal</keyword>
<keyword id="KW-0800">Toxin</keyword>
<keyword id="KW-0738">Voltage-gated sodium channel impairing toxin</keyword>
<sequence length="83" mass="9264">MKASMYLALAGLVLLFVVGYASESEEKEFPRELLSKIFAVDDFKGEERGCKGFGDSCTPGKNERCPNYACSSKHKWCKVYLGK</sequence>
<accession>D2Y203</accession>
<proteinExistence type="evidence at transcript level"/>
<evidence type="ECO:0000250" key="1"/>
<evidence type="ECO:0000255" key="2"/>
<evidence type="ECO:0000305" key="3"/>
<feature type="signal peptide" evidence="2">
    <location>
        <begin position="1"/>
        <end position="21"/>
    </location>
</feature>
<feature type="propeptide" id="PRO_0000400560" evidence="1">
    <location>
        <begin position="22"/>
        <end position="48"/>
    </location>
</feature>
<feature type="peptide" id="PRO_0000400561" description="Mu-theraphotoxin-Hhn2g">
    <location>
        <begin position="49"/>
        <end position="81"/>
    </location>
</feature>
<feature type="modified residue" description="Leucine amide" evidence="1">
    <location>
        <position position="81"/>
    </location>
</feature>
<feature type="disulfide bond" evidence="1">
    <location>
        <begin position="50"/>
        <end position="65"/>
    </location>
</feature>
<feature type="disulfide bond" evidence="1">
    <location>
        <begin position="57"/>
        <end position="70"/>
    </location>
</feature>
<protein>
    <recommendedName>
        <fullName>Mu-theraphotoxin-Hhn2g</fullName>
        <shortName>Mu-TRTX-Hhn2g</shortName>
    </recommendedName>
    <alternativeName>
        <fullName>Hainantoxin-III-14</fullName>
        <shortName>HNTX-III-14</shortName>
    </alternativeName>
</protein>
<name>H3N01_CYRHA</name>
<comment type="function">
    <text evidence="1">Lethal neurotoxin. Selectively blocks tetrodotoxin-sensitive voltage-gated sodium channels (Nav). Does not affect tetrodotoxin-resistant voltage-gated sodium channels or calcium channels (By similarity).</text>
</comment>
<comment type="subunit">
    <text evidence="1">Monomer.</text>
</comment>
<comment type="subcellular location">
    <subcellularLocation>
        <location evidence="1">Secreted</location>
    </subcellularLocation>
</comment>
<comment type="tissue specificity">
    <text>Expressed by the venom gland.</text>
</comment>
<comment type="domain">
    <text evidence="1">The presence of a 'disulfide through disulfide knot' structurally defines this protein as a knottin.</text>
</comment>
<comment type="similarity">
    <text evidence="3">Belongs to the neurotoxin 10 (Hwtx-1) family. 15 (Hntx-3) subfamily.</text>
</comment>
<comment type="caution">
    <text evidence="3">While it is structurally defined as a knottin it lacks the conserved Cys residue in position 64.</text>
</comment>
<organism>
    <name type="scientific">Cyriopagopus hainanus</name>
    <name type="common">Chinese bird spider</name>
    <name type="synonym">Haplopelma hainanum</name>
    <dbReference type="NCBI Taxonomy" id="209901"/>
    <lineage>
        <taxon>Eukaryota</taxon>
        <taxon>Metazoa</taxon>
        <taxon>Ecdysozoa</taxon>
        <taxon>Arthropoda</taxon>
        <taxon>Chelicerata</taxon>
        <taxon>Arachnida</taxon>
        <taxon>Araneae</taxon>
        <taxon>Mygalomorphae</taxon>
        <taxon>Theraphosidae</taxon>
        <taxon>Haplopelma</taxon>
    </lineage>
</organism>
<reference key="1">
    <citation type="journal article" date="2010" name="J. Proteome Res.">
        <title>Molecular diversification of peptide toxins from the tarantula Haplopelma hainanum (Ornithoctonus hainana) venom based on transcriptomic, peptidomic, and genomic analyses.</title>
        <authorList>
            <person name="Tang X."/>
            <person name="Zhang Y."/>
            <person name="Hu W."/>
            <person name="Xu D."/>
            <person name="Tao H."/>
            <person name="Yang X."/>
            <person name="Li Y."/>
            <person name="Jiang L."/>
            <person name="Liang S."/>
        </authorList>
    </citation>
    <scope>NUCLEOTIDE SEQUENCE [LARGE SCALE MRNA]</scope>
    <source>
        <tissue>Venom gland</tissue>
    </source>
</reference>
<dbReference type="EMBL" id="GU292880">
    <property type="protein sequence ID" value="ADB56696.1"/>
    <property type="molecule type" value="mRNA"/>
</dbReference>
<dbReference type="SMR" id="D2Y203"/>
<dbReference type="ArachnoServer" id="AS001618">
    <property type="toxin name" value="mu-theraphotoxin-Hhn2g"/>
</dbReference>
<dbReference type="GO" id="GO:0005576">
    <property type="term" value="C:extracellular region"/>
    <property type="evidence" value="ECO:0007669"/>
    <property type="project" value="UniProtKB-SubCell"/>
</dbReference>
<dbReference type="GO" id="GO:0044231">
    <property type="term" value="C:host cell presynaptic membrane"/>
    <property type="evidence" value="ECO:0007669"/>
    <property type="project" value="UniProtKB-KW"/>
</dbReference>
<dbReference type="GO" id="GO:0008200">
    <property type="term" value="F:ion channel inhibitor activity"/>
    <property type="evidence" value="ECO:0007669"/>
    <property type="project" value="InterPro"/>
</dbReference>
<dbReference type="GO" id="GO:0017080">
    <property type="term" value="F:sodium channel regulator activity"/>
    <property type="evidence" value="ECO:0007669"/>
    <property type="project" value="UniProtKB-KW"/>
</dbReference>
<dbReference type="GO" id="GO:0090729">
    <property type="term" value="F:toxin activity"/>
    <property type="evidence" value="ECO:0007669"/>
    <property type="project" value="UniProtKB-KW"/>
</dbReference>
<dbReference type="InterPro" id="IPR011696">
    <property type="entry name" value="Huwentoxin-1"/>
</dbReference>
<dbReference type="Pfam" id="PF07740">
    <property type="entry name" value="Toxin_12"/>
    <property type="match status" value="1"/>
</dbReference>
<dbReference type="SUPFAM" id="SSF57059">
    <property type="entry name" value="omega toxin-like"/>
    <property type="match status" value="1"/>
</dbReference>